<proteinExistence type="evidence at protein level"/>
<sequence>MRKFAYCKVVLATSLIWVLLDMFLLLYFSECNKCDEKKERGLPAGDVLEPVQKPHEGPGEMGKPVVIPKEDQDKMKEMFKINQFNLMASEMIALNRSLPDVRLEGCKTKVYPDNLPTTSVVIVFHNEAWSTLLRTVHSVINRSPRHMLEEIVLVDDASERDFLKRPLESYVKKLKVPVHVIRMEQRSGLIRARLKGAAVSKGQVITFLDAHCECTVGWLEPLLARIKHDRKTVVCPIIDVISDDTFEYMAGSDMTYGGFNWKLNFRWYPVPQREMDRRKGDRTLPVRTPTMAGGLFSIDRDYFQEIGTYDAGMDIWGGENLEISFRIWQCGGTLEIVTCSHVGHVFRKATPYTFPGGTGQIINKNNRRLAEVWMDEFKTFFYIISPGVTKVDYGDISSRLGLRHKLQCRPFSWYLENIYPDSQIPRHYSSLGEIRNVETNQCLDNMARKENEKVGIFNCHGMGGNQVFSYTANKEIRTDDLCLDVSKLNGPVTMLKCHHLKGNQLWEYDPVKLTLQHVNSNQCLDKATEEDSQVPSIRDCSGSRSQQWLLRNVTLPEIF</sequence>
<protein>
    <recommendedName>
        <fullName evidence="3">Polypeptide N-acetylgalactosaminyltransferase 1</fullName>
        <ecNumber evidence="7">2.4.1.41</ecNumber>
    </recommendedName>
    <alternativeName>
        <fullName>Polypeptide GalNAc transferase 1</fullName>
        <shortName>GalNAc-T1</shortName>
        <shortName>pp-GaNTase 1</shortName>
    </alternativeName>
    <alternativeName>
        <fullName>Protein-UDP acetylgalactosaminyltransferase 1</fullName>
    </alternativeName>
    <alternativeName>
        <fullName>UDP-GalNAc:polypeptide N-acetylgalactosaminyltransferase 1</fullName>
    </alternativeName>
    <component>
        <recommendedName>
            <fullName>Polypeptide N-acetylgalactosaminyltransferase 1 soluble form</fullName>
        </recommendedName>
    </component>
</protein>
<comment type="function">
    <text evidence="3 7">Catalyzes the initial reaction in O-linked oligosaccharide biosynthesis, the transfer of an N-acetyl-D-galactosamine residue to a serine or threonine residue on the protein receptor (PubMed:8748160). Has a broad spectrum of substrates such as apomucin-, MUC5AC-, MUC1- and MUC2-derived peptides (By similarity).</text>
</comment>
<comment type="catalytic activity">
    <reaction evidence="7">
        <text>L-seryl-[protein] + UDP-N-acetyl-alpha-D-galactosamine = a 3-O-[N-acetyl-alpha-D-galactosaminyl]-L-seryl-[protein] + UDP + H(+)</text>
        <dbReference type="Rhea" id="RHEA:23956"/>
        <dbReference type="Rhea" id="RHEA-COMP:9863"/>
        <dbReference type="Rhea" id="RHEA-COMP:12788"/>
        <dbReference type="ChEBI" id="CHEBI:15378"/>
        <dbReference type="ChEBI" id="CHEBI:29999"/>
        <dbReference type="ChEBI" id="CHEBI:53604"/>
        <dbReference type="ChEBI" id="CHEBI:58223"/>
        <dbReference type="ChEBI" id="CHEBI:67138"/>
        <dbReference type="EC" id="2.4.1.41"/>
    </reaction>
    <physiologicalReaction direction="left-to-right" evidence="9">
        <dbReference type="Rhea" id="RHEA:23957"/>
    </physiologicalReaction>
</comment>
<comment type="catalytic activity">
    <reaction evidence="7">
        <text>L-threonyl-[protein] + UDP-N-acetyl-alpha-D-galactosamine = a 3-O-[N-acetyl-alpha-D-galactosaminyl]-L-threonyl-[protein] + UDP + H(+)</text>
        <dbReference type="Rhea" id="RHEA:52424"/>
        <dbReference type="Rhea" id="RHEA-COMP:11060"/>
        <dbReference type="Rhea" id="RHEA-COMP:11689"/>
        <dbReference type="ChEBI" id="CHEBI:15378"/>
        <dbReference type="ChEBI" id="CHEBI:30013"/>
        <dbReference type="ChEBI" id="CHEBI:58223"/>
        <dbReference type="ChEBI" id="CHEBI:67138"/>
        <dbReference type="ChEBI" id="CHEBI:87075"/>
        <dbReference type="EC" id="2.4.1.41"/>
    </reaction>
    <physiologicalReaction direction="left-to-right" evidence="9">
        <dbReference type="Rhea" id="RHEA:52425"/>
    </physiologicalReaction>
</comment>
<comment type="cofactor">
    <cofactor evidence="2">
        <name>Mn(2+)</name>
        <dbReference type="ChEBI" id="CHEBI:29035"/>
    </cofactor>
</comment>
<comment type="pathway">
    <text evidence="7">Protein modification; protein glycosylation.</text>
</comment>
<comment type="subcellular location">
    <molecule>Polypeptide N-acetylgalactosaminyltransferase 1</molecule>
    <subcellularLocation>
        <location evidence="1">Golgi apparatus</location>
        <location evidence="1">Golgi stack membrane</location>
        <topology evidence="1">Single-pass type II membrane protein</topology>
    </subcellularLocation>
</comment>
<comment type="subcellular location">
    <molecule>Polypeptide N-acetylgalactosaminyltransferase 1 soluble form</molecule>
    <subcellularLocation>
        <location evidence="1">Secreted</location>
    </subcellularLocation>
</comment>
<comment type="domain">
    <text evidence="1">There are two conserved domains in the glycosyltransferase region: the N-terminal domain (domain A, also called GT1 motif), which is probably involved in manganese coordination and substrate binding and the C-terminal domain (domain B, also called Gal/GalNAc-T motif), which is probably involved in catalytic reaction and UDP-Gal binding.</text>
</comment>
<comment type="domain">
    <text evidence="1">The ricin B-type lectin domain directs the glycopeptide specificity. It is required in the glycopeptide specificity of enzyme activity but not for activity with naked peptide substrates, suggesting that it triggers the catalytic domain to act on GalNAc-glycopeptide substrates (By similarity).</text>
</comment>
<comment type="similarity">
    <text evidence="8">Belongs to the glycosyltransferase 2 family. GalNAc-T subfamily.</text>
</comment>
<keyword id="KW-1015">Disulfide bond</keyword>
<keyword id="KW-0325">Glycoprotein</keyword>
<keyword id="KW-0328">Glycosyltransferase</keyword>
<keyword id="KW-0333">Golgi apparatus</keyword>
<keyword id="KW-0430">Lectin</keyword>
<keyword id="KW-0464">Manganese</keyword>
<keyword id="KW-0472">Membrane</keyword>
<keyword id="KW-0479">Metal-binding</keyword>
<keyword id="KW-1185">Reference proteome</keyword>
<keyword id="KW-0964">Secreted</keyword>
<keyword id="KW-0735">Signal-anchor</keyword>
<keyword id="KW-0808">Transferase</keyword>
<keyword id="KW-0812">Transmembrane</keyword>
<keyword id="KW-1133">Transmembrane helix</keyword>
<gene>
    <name evidence="3" type="primary">GALNT1</name>
</gene>
<dbReference type="EC" id="2.4.1.41" evidence="7"/>
<dbReference type="EMBL" id="D85389">
    <property type="protein sequence ID" value="BAA12800.1"/>
    <property type="molecule type" value="mRNA"/>
</dbReference>
<dbReference type="SMR" id="Q29121"/>
<dbReference type="FunCoup" id="Q29121">
    <property type="interactions" value="487"/>
</dbReference>
<dbReference type="STRING" id="9823.ENSSSCP00000004051"/>
<dbReference type="CAZy" id="CBM13">
    <property type="family name" value="Carbohydrate-Binding Module Family 13"/>
</dbReference>
<dbReference type="CAZy" id="GT27">
    <property type="family name" value="Glycosyltransferase Family 27"/>
</dbReference>
<dbReference type="GlyCosmos" id="Q29121">
    <property type="glycosylation" value="2 sites, No reported glycans"/>
</dbReference>
<dbReference type="GlyGen" id="Q29121">
    <property type="glycosylation" value="2 sites"/>
</dbReference>
<dbReference type="PaxDb" id="9823-ENSSSCP00000028297"/>
<dbReference type="PeptideAtlas" id="Q29121"/>
<dbReference type="eggNOG" id="KOG3736">
    <property type="taxonomic scope" value="Eukaryota"/>
</dbReference>
<dbReference type="InParanoid" id="Q29121"/>
<dbReference type="BRENDA" id="2.4.1.41">
    <property type="organism ID" value="6170"/>
</dbReference>
<dbReference type="UniPathway" id="UPA00378"/>
<dbReference type="Proteomes" id="UP000008227">
    <property type="component" value="Unplaced"/>
</dbReference>
<dbReference type="Proteomes" id="UP000314985">
    <property type="component" value="Unplaced"/>
</dbReference>
<dbReference type="Proteomes" id="UP000694570">
    <property type="component" value="Unplaced"/>
</dbReference>
<dbReference type="Proteomes" id="UP000694571">
    <property type="component" value="Unplaced"/>
</dbReference>
<dbReference type="Proteomes" id="UP000694720">
    <property type="component" value="Unplaced"/>
</dbReference>
<dbReference type="Proteomes" id="UP000694722">
    <property type="component" value="Unplaced"/>
</dbReference>
<dbReference type="Proteomes" id="UP000694723">
    <property type="component" value="Unplaced"/>
</dbReference>
<dbReference type="Proteomes" id="UP000694724">
    <property type="component" value="Unplaced"/>
</dbReference>
<dbReference type="Proteomes" id="UP000694725">
    <property type="component" value="Unplaced"/>
</dbReference>
<dbReference type="Proteomes" id="UP000694726">
    <property type="component" value="Unplaced"/>
</dbReference>
<dbReference type="Proteomes" id="UP000694727">
    <property type="component" value="Unplaced"/>
</dbReference>
<dbReference type="Proteomes" id="UP000694728">
    <property type="component" value="Unplaced"/>
</dbReference>
<dbReference type="GO" id="GO:0005576">
    <property type="term" value="C:extracellular region"/>
    <property type="evidence" value="ECO:0007669"/>
    <property type="project" value="UniProtKB-SubCell"/>
</dbReference>
<dbReference type="GO" id="GO:0005794">
    <property type="term" value="C:Golgi apparatus"/>
    <property type="evidence" value="ECO:0000318"/>
    <property type="project" value="GO_Central"/>
</dbReference>
<dbReference type="GO" id="GO:0032580">
    <property type="term" value="C:Golgi cisterna membrane"/>
    <property type="evidence" value="ECO:0007669"/>
    <property type="project" value="UniProtKB-SubCell"/>
</dbReference>
<dbReference type="GO" id="GO:0030246">
    <property type="term" value="F:carbohydrate binding"/>
    <property type="evidence" value="ECO:0007669"/>
    <property type="project" value="UniProtKB-KW"/>
</dbReference>
<dbReference type="GO" id="GO:0030145">
    <property type="term" value="F:manganese ion binding"/>
    <property type="evidence" value="ECO:0000250"/>
    <property type="project" value="UniProtKB"/>
</dbReference>
<dbReference type="GO" id="GO:0004653">
    <property type="term" value="F:polypeptide N-acetylgalactosaminyltransferase activity"/>
    <property type="evidence" value="ECO:0000314"/>
    <property type="project" value="UniProtKB"/>
</dbReference>
<dbReference type="GO" id="GO:0006493">
    <property type="term" value="P:protein O-linked glycosylation"/>
    <property type="evidence" value="ECO:0000250"/>
    <property type="project" value="UniProtKB"/>
</dbReference>
<dbReference type="CDD" id="cd23466">
    <property type="entry name" value="beta-trefoil_Ricin_GALNT1"/>
    <property type="match status" value="1"/>
</dbReference>
<dbReference type="CDD" id="cd02510">
    <property type="entry name" value="pp-GalNAc-T"/>
    <property type="match status" value="1"/>
</dbReference>
<dbReference type="FunFam" id="2.80.10.50:FF:000014">
    <property type="entry name" value="Polypeptide N-acetylgalactosaminyltransferase"/>
    <property type="match status" value="1"/>
</dbReference>
<dbReference type="FunFam" id="3.90.550.10:FF:000005">
    <property type="entry name" value="Polypeptide N-acetylgalactosaminyltransferase"/>
    <property type="match status" value="1"/>
</dbReference>
<dbReference type="Gene3D" id="2.80.10.50">
    <property type="match status" value="1"/>
</dbReference>
<dbReference type="Gene3D" id="3.90.550.10">
    <property type="entry name" value="Spore Coat Polysaccharide Biosynthesis Protein SpsA, Chain A"/>
    <property type="match status" value="1"/>
</dbReference>
<dbReference type="InterPro" id="IPR045885">
    <property type="entry name" value="GalNAc-T"/>
</dbReference>
<dbReference type="InterPro" id="IPR001173">
    <property type="entry name" value="Glyco_trans_2-like"/>
</dbReference>
<dbReference type="InterPro" id="IPR029044">
    <property type="entry name" value="Nucleotide-diphossugar_trans"/>
</dbReference>
<dbReference type="InterPro" id="IPR035992">
    <property type="entry name" value="Ricin_B-like_lectins"/>
</dbReference>
<dbReference type="InterPro" id="IPR000772">
    <property type="entry name" value="Ricin_B_lectin"/>
</dbReference>
<dbReference type="PANTHER" id="PTHR11675">
    <property type="entry name" value="N-ACETYLGALACTOSAMINYLTRANSFERASE"/>
    <property type="match status" value="1"/>
</dbReference>
<dbReference type="PANTHER" id="PTHR11675:SF123">
    <property type="entry name" value="POLYPEPTIDE N-ACETYLGALACTOSAMINYLTRANSFERASE 1"/>
    <property type="match status" value="1"/>
</dbReference>
<dbReference type="Pfam" id="PF00535">
    <property type="entry name" value="Glycos_transf_2"/>
    <property type="match status" value="1"/>
</dbReference>
<dbReference type="Pfam" id="PF00652">
    <property type="entry name" value="Ricin_B_lectin"/>
    <property type="match status" value="1"/>
</dbReference>
<dbReference type="SMART" id="SM00458">
    <property type="entry name" value="RICIN"/>
    <property type="match status" value="1"/>
</dbReference>
<dbReference type="SUPFAM" id="SSF53448">
    <property type="entry name" value="Nucleotide-diphospho-sugar transferases"/>
    <property type="match status" value="1"/>
</dbReference>
<dbReference type="SUPFAM" id="SSF50370">
    <property type="entry name" value="Ricin B-like lectins"/>
    <property type="match status" value="1"/>
</dbReference>
<dbReference type="PROSITE" id="PS50231">
    <property type="entry name" value="RICIN_B_LECTIN"/>
    <property type="match status" value="1"/>
</dbReference>
<accession>Q29121</accession>
<feature type="chain" id="PRO_0000223389" description="Polypeptide N-acetylgalactosaminyltransferase 1">
    <location>
        <begin position="1"/>
        <end position="559"/>
    </location>
</feature>
<feature type="chain" id="PRO_0000012261" description="Polypeptide N-acetylgalactosaminyltransferase 1 soluble form" evidence="1">
    <location>
        <begin position="41"/>
        <end position="559"/>
    </location>
</feature>
<feature type="topological domain" description="Cytoplasmic" evidence="4">
    <location>
        <begin position="1"/>
        <end position="8"/>
    </location>
</feature>
<feature type="transmembrane region" description="Helical; Signal-anchor for type II membrane protein" evidence="4">
    <location>
        <begin position="9"/>
        <end position="28"/>
    </location>
</feature>
<feature type="topological domain" description="Lumenal" evidence="4">
    <location>
        <begin position="29"/>
        <end position="559"/>
    </location>
</feature>
<feature type="domain" description="Ricin B-type lectin" evidence="5">
    <location>
        <begin position="429"/>
        <end position="551"/>
    </location>
</feature>
<feature type="region of interest" description="Disordered" evidence="6">
    <location>
        <begin position="45"/>
        <end position="66"/>
    </location>
</feature>
<feature type="region of interest" description="Catalytic subdomain A">
    <location>
        <begin position="115"/>
        <end position="225"/>
    </location>
</feature>
<feature type="region of interest" description="Catalytic subdomain B">
    <location>
        <begin position="285"/>
        <end position="347"/>
    </location>
</feature>
<feature type="binding site" evidence="1">
    <location>
        <position position="156"/>
    </location>
    <ligand>
        <name>substrate</name>
    </ligand>
</feature>
<feature type="binding site" evidence="1">
    <location>
        <position position="186"/>
    </location>
    <ligand>
        <name>substrate</name>
    </ligand>
</feature>
<feature type="binding site" evidence="1">
    <location>
        <position position="209"/>
    </location>
    <ligand>
        <name>Mn(2+)</name>
        <dbReference type="ChEBI" id="CHEBI:29035"/>
    </ligand>
</feature>
<feature type="binding site" evidence="1">
    <location>
        <position position="211"/>
    </location>
    <ligand>
        <name>Mn(2+)</name>
        <dbReference type="ChEBI" id="CHEBI:29035"/>
    </ligand>
</feature>
<feature type="binding site" evidence="1">
    <location>
        <position position="316"/>
    </location>
    <ligand>
        <name>substrate</name>
    </ligand>
</feature>
<feature type="binding site" evidence="1">
    <location>
        <position position="344"/>
    </location>
    <ligand>
        <name>Mn(2+)</name>
        <dbReference type="ChEBI" id="CHEBI:29035"/>
    </ligand>
</feature>
<feature type="binding site" evidence="1">
    <location>
        <position position="347"/>
    </location>
    <ligand>
        <name>substrate</name>
    </ligand>
</feature>
<feature type="binding site" evidence="1">
    <location>
        <position position="352"/>
    </location>
    <ligand>
        <name>substrate</name>
    </ligand>
</feature>
<feature type="glycosylation site" description="N-linked (GlcNAc...) asparagine" evidence="4">
    <location>
        <position position="95"/>
    </location>
</feature>
<feature type="glycosylation site" description="N-linked (GlcNAc...) asparagine" evidence="4">
    <location>
        <position position="552"/>
    </location>
</feature>
<feature type="disulfide bond" evidence="5">
    <location>
        <begin position="106"/>
        <end position="339"/>
    </location>
</feature>
<feature type="disulfide bond" evidence="5">
    <location>
        <begin position="330"/>
        <end position="408"/>
    </location>
</feature>
<feature type="disulfide bond" evidence="5">
    <location>
        <begin position="442"/>
        <end position="459"/>
    </location>
</feature>
<feature type="disulfide bond" evidence="5">
    <location>
        <begin position="482"/>
        <end position="497"/>
    </location>
</feature>
<feature type="disulfide bond" evidence="5">
    <location>
        <begin position="523"/>
        <end position="540"/>
    </location>
</feature>
<reference key="1">
    <citation type="journal article" date="1995" name="Glycoconj. J.">
        <title>Cloning and expression of a porcine UDP-GalNAc: polypeptide N-acetylgalactosaminyl transferase.</title>
        <authorList>
            <person name="Yoshida A."/>
            <person name="Hara T."/>
            <person name="Ikenaga H."/>
            <person name="Takeuchi M."/>
        </authorList>
    </citation>
    <scope>NUCLEOTIDE SEQUENCE [MRNA]</scope>
    <scope>FUNCTION</scope>
    <scope>CATALYTIC ACTIVITY</scope>
    <scope>PATHWAY</scope>
    <source>
        <tissue>Lung</tissue>
    </source>
</reference>
<organism>
    <name type="scientific">Sus scrofa</name>
    <name type="common">Pig</name>
    <dbReference type="NCBI Taxonomy" id="9823"/>
    <lineage>
        <taxon>Eukaryota</taxon>
        <taxon>Metazoa</taxon>
        <taxon>Chordata</taxon>
        <taxon>Craniata</taxon>
        <taxon>Vertebrata</taxon>
        <taxon>Euteleostomi</taxon>
        <taxon>Mammalia</taxon>
        <taxon>Eutheria</taxon>
        <taxon>Laurasiatheria</taxon>
        <taxon>Artiodactyla</taxon>
        <taxon>Suina</taxon>
        <taxon>Suidae</taxon>
        <taxon>Sus</taxon>
    </lineage>
</organism>
<name>GALT1_PIG</name>
<evidence type="ECO:0000250" key="1"/>
<evidence type="ECO:0000250" key="2">
    <source>
        <dbReference type="UniProtKB" id="O08912"/>
    </source>
</evidence>
<evidence type="ECO:0000250" key="3">
    <source>
        <dbReference type="UniProtKB" id="Q10472"/>
    </source>
</evidence>
<evidence type="ECO:0000255" key="4"/>
<evidence type="ECO:0000255" key="5">
    <source>
        <dbReference type="PROSITE-ProRule" id="PRU00174"/>
    </source>
</evidence>
<evidence type="ECO:0000256" key="6">
    <source>
        <dbReference type="SAM" id="MobiDB-lite"/>
    </source>
</evidence>
<evidence type="ECO:0000269" key="7">
    <source>
    </source>
</evidence>
<evidence type="ECO:0000305" key="8"/>
<evidence type="ECO:0000305" key="9">
    <source>
    </source>
</evidence>